<feature type="chain" id="PRO_0000382234" description="Transitional endoplasmic reticulum ATPase">
    <location>
        <begin position="1"/>
        <end position="805"/>
    </location>
</feature>
<feature type="region of interest" description="Disordered" evidence="7">
    <location>
        <begin position="768"/>
        <end position="805"/>
    </location>
</feature>
<feature type="compositionally biased region" description="Gly residues" evidence="7">
    <location>
        <begin position="776"/>
        <end position="793"/>
    </location>
</feature>
<feature type="binding site" evidence="3">
    <location>
        <begin position="247"/>
        <end position="253"/>
    </location>
    <ligand>
        <name>ATP</name>
        <dbReference type="ChEBI" id="CHEBI:30616"/>
        <label>1</label>
    </ligand>
</feature>
<feature type="binding site" evidence="3">
    <location>
        <position position="348"/>
    </location>
    <ligand>
        <name>ATP</name>
        <dbReference type="ChEBI" id="CHEBI:30616"/>
        <label>1</label>
    </ligand>
</feature>
<feature type="binding site" evidence="3">
    <location>
        <position position="384"/>
    </location>
    <ligand>
        <name>ATP</name>
        <dbReference type="ChEBI" id="CHEBI:30616"/>
        <label>1</label>
    </ligand>
</feature>
<feature type="binding site" evidence="4">
    <location>
        <begin position="521"/>
        <end position="526"/>
    </location>
    <ligand>
        <name>ATP</name>
        <dbReference type="ChEBI" id="CHEBI:30616"/>
        <label>2</label>
    </ligand>
</feature>
<feature type="modified residue" description="Phosphoserine" evidence="5">
    <location>
        <position position="3"/>
    </location>
</feature>
<organism>
    <name type="scientific">Xenopus tropicalis</name>
    <name type="common">Western clawed frog</name>
    <name type="synonym">Silurana tropicalis</name>
    <dbReference type="NCBI Taxonomy" id="8364"/>
    <lineage>
        <taxon>Eukaryota</taxon>
        <taxon>Metazoa</taxon>
        <taxon>Chordata</taxon>
        <taxon>Craniata</taxon>
        <taxon>Vertebrata</taxon>
        <taxon>Euteleostomi</taxon>
        <taxon>Amphibia</taxon>
        <taxon>Batrachia</taxon>
        <taxon>Anura</taxon>
        <taxon>Pipoidea</taxon>
        <taxon>Pipidae</taxon>
        <taxon>Xenopodinae</taxon>
        <taxon>Xenopus</taxon>
        <taxon>Silurana</taxon>
    </lineage>
</organism>
<gene>
    <name evidence="8" type="primary">vcp</name>
</gene>
<sequence>MASGSDSKSDDLSTAILKQKSRPNRLIVDESINEDNSVVSLSQAKMDELQLFRGDTVLLKGKKRREAVCIVLSDDTCSDEKIRMNRVVRNNLRVRLGDVISIQPCPDVKYGKRIHVLPIDDTVEGITGNLFEVYLKPYFLEAYRPIRKGDIFLVRGGMRAVEFKVVETDPSPYCIVAPDTVIHCEGEPIKREDEEESLNEVGYDDIGGCRKQLAQIKEMVELPLRHPALFKAIGVKPPRGILLYGPPGTGKTLIARAVANETGAFFFLINGPEIMSKLAGESESNLRKAFEEAEKNAPAIIFIDELDAIAPKREKTHGEVERRIVSQLLTLMDGLKQRAHVIVMAATNRPNSIDPALRRFGRFDREVDIGIPDSTGRLEILQIHTKNMKLSDDVDLEQVANETHGHVGADLAALCSEAALQAIRKKMDLIDLEDETIDAEVMNSLAVTMDDFRWALSQSNPSALRETVVEVPQVTWEDIGGLEDVKRELQELVQYPVEHPDKFLKFGMTPSKGVLFYGPPGCGKTLLAKAIANECQANFISIKGPELLTMWFGESEANVREIFDKARQAAPCVLFFDELDSIAKARGGNIGDGGGAADRVINQILTEMDGMSTKKNVFIIGATNRPDIIDPAILRPGRLDQLIYIPLPDEKSRIAILKANLRKSPVAKDVDLDFLAKMTNGFSGADLTEICQRACKLAIRESIENEIRRERERQTNPSAMEVEEDDPVPEIRRDHFEEAMRFARRSVSDNDIRKYEMFAQTLQQSRGFGSFRFPAGGQGGAGPSQGAGGGSGGSHFNEEEDDLYG</sequence>
<keyword id="KW-0067">ATP-binding</keyword>
<keyword id="KW-0072">Autophagy</keyword>
<keyword id="KW-0963">Cytoplasm</keyword>
<keyword id="KW-0227">DNA damage</keyword>
<keyword id="KW-0234">DNA repair</keyword>
<keyword id="KW-0256">Endoplasmic reticulum</keyword>
<keyword id="KW-0378">Hydrolase</keyword>
<keyword id="KW-0446">Lipid-binding</keyword>
<keyword id="KW-0547">Nucleotide-binding</keyword>
<keyword id="KW-0539">Nucleus</keyword>
<keyword id="KW-0597">Phosphoprotein</keyword>
<keyword id="KW-1185">Reference proteome</keyword>
<keyword id="KW-0813">Transport</keyword>
<protein>
    <recommendedName>
        <fullName evidence="1">Transitional endoplasmic reticulum ATPase</fullName>
        <shortName evidence="1">TER ATPase</shortName>
        <ecNumber evidence="1">3.6.4.6</ecNumber>
    </recommendedName>
    <alternativeName>
        <fullName evidence="1">15S Mg(2+)-ATPase p97 subunit</fullName>
        <shortName evidence="1">p97</shortName>
    </alternativeName>
    <alternativeName>
        <fullName evidence="8">Valosin-containing protein</fullName>
        <shortName evidence="1">VCP</shortName>
    </alternativeName>
</protein>
<evidence type="ECO:0000250" key="1">
    <source>
        <dbReference type="UniProtKB" id="P23787"/>
    </source>
</evidence>
<evidence type="ECO:0000250" key="2">
    <source>
        <dbReference type="UniProtKB" id="P46462"/>
    </source>
</evidence>
<evidence type="ECO:0000250" key="3">
    <source>
        <dbReference type="UniProtKB" id="P55072"/>
    </source>
</evidence>
<evidence type="ECO:0000250" key="4">
    <source>
        <dbReference type="UniProtKB" id="Q01853"/>
    </source>
</evidence>
<evidence type="ECO:0000250" key="5">
    <source>
        <dbReference type="UniProtKB" id="Q7ZU99"/>
    </source>
</evidence>
<evidence type="ECO:0000255" key="6"/>
<evidence type="ECO:0000256" key="7">
    <source>
        <dbReference type="SAM" id="MobiDB-lite"/>
    </source>
</evidence>
<evidence type="ECO:0000312" key="8">
    <source>
        <dbReference type="EMBL" id="AAH74716.1"/>
    </source>
</evidence>
<accession>Q6GL04</accession>
<comment type="function">
    <text evidence="1 2 3 5">Necessary for the fragmentation of Golgi stacks during mitosis and for their reassembly after mitosis. Involved in the formation of the nuclear envelope, and of the transitional endoplasmic reticulum (tER). The transfer of membranes from the endoplasmic reticulum to the Golgi apparatus occurs via 50-70 nm transition vesicles which derive from part-rough, part-smooth transitional elements of the endoplasmic reticulum (tER). Vesicle budding from the tER is an ATP-dependent process. Involved in endoplasmic reticulum stress-induced pre-emptive quality control, a mechanism that selectively attenuates the translocation of newly synthesized proteins into the endoplasmic reticulum and reroutes them to the cytosol for proteasomal degradation. Involved in clearance process by mediating G3BP1 extraction from stress granules (By similarity). Also involved in DNA damage response: recruited to double-strand breaks (DSBs) sites and promotes the recruitment of tp53bp1 at DNA damage sites (By similarity). Together with sprtn metalloprotease, involved in the repair of covalent DNA-protein cross-links (DPCs) during DNA synthesis (By similarity). Involved in interstrand cross-link repair in response to replication stress by mediating unloading of the ubiquitinated CMG helicase complex (By similarity). Enhances cell cycle progression and inhibits apoptosis at low temperatures (By similarity). Essential for the maturation of ubiquitin-containing autophagosomes and the clearance of ubiquitinated protein by autophagy (By similarity). Acts as a negative regulator of type I interferon production by promoting ubiquitination of rigi (By similarity). May play a role in the ubiquitin-dependent sorting of membrane proteins to lysosomes where they undergo degradation (By similarity). May more particularly play a role in caveolins sorting in cells (By similarity). By controlling the steady-state expression of the IGF1R receptor, indirectly regulates the insulin-like growth factor receptor signaling pathway (By similarity).</text>
</comment>
<comment type="catalytic activity">
    <reaction evidence="1">
        <text>ATP + H2O = ADP + phosphate + H(+)</text>
        <dbReference type="Rhea" id="RHEA:13065"/>
        <dbReference type="ChEBI" id="CHEBI:15377"/>
        <dbReference type="ChEBI" id="CHEBI:15378"/>
        <dbReference type="ChEBI" id="CHEBI:30616"/>
        <dbReference type="ChEBI" id="CHEBI:43474"/>
        <dbReference type="ChEBI" id="CHEBI:456216"/>
        <dbReference type="EC" id="3.6.4.6"/>
    </reaction>
</comment>
<comment type="activity regulation">
    <text evidence="1">ATPase activity is inhibited or reduced by lowering pH from 9.0 to 7.0, and by addition of Ca(2+), EDTA, KNO(3) or by treatment with N-ethylmaleimide (NEM).</text>
</comment>
<comment type="subunit">
    <text evidence="1">Homohexamer. Forms a ring-shaped particle of 12.5 nm diameter, that displays 6-fold radial symmetry. Interacts with the FACT/DUF complex, which includes subunits ssrp1/duf87 and supt16h/duf140 (By similarity).</text>
</comment>
<comment type="subcellular location">
    <subcellularLocation>
        <location evidence="1">Cytoplasm</location>
        <location evidence="1">Cytosol</location>
    </subcellularLocation>
    <subcellularLocation>
        <location evidence="3">Endoplasmic reticulum</location>
    </subcellularLocation>
    <subcellularLocation>
        <location evidence="1">Nucleus</location>
    </subcellularLocation>
    <subcellularLocation>
        <location evidence="3">Cytoplasm</location>
        <location evidence="3">Stress granule</location>
    </subcellularLocation>
</comment>
<comment type="PTM">
    <text evidence="1 5">Phosphorylated.</text>
</comment>
<comment type="similarity">
    <text evidence="6">Belongs to the AAA ATPase family.</text>
</comment>
<name>TERA_XENTR</name>
<dbReference type="EC" id="3.6.4.6" evidence="1"/>
<dbReference type="EMBL" id="BC074716">
    <property type="protein sequence ID" value="AAH74716.1"/>
    <property type="molecule type" value="mRNA"/>
</dbReference>
<dbReference type="RefSeq" id="NP_001005677.1">
    <property type="nucleotide sequence ID" value="NM_001005677.1"/>
</dbReference>
<dbReference type="SMR" id="Q6GL04"/>
<dbReference type="FunCoup" id="Q6GL04">
    <property type="interactions" value="2158"/>
</dbReference>
<dbReference type="STRING" id="8364.ENSXETP00000015296"/>
<dbReference type="PaxDb" id="8364-ENSXETP00000054726"/>
<dbReference type="GeneID" id="448177"/>
<dbReference type="KEGG" id="xtr:448177"/>
<dbReference type="AGR" id="Xenbase:XB-GENE-969573"/>
<dbReference type="CTD" id="7415"/>
<dbReference type="Xenbase" id="XB-GENE-969573">
    <property type="gene designation" value="vcp"/>
</dbReference>
<dbReference type="eggNOG" id="KOG0730">
    <property type="taxonomic scope" value="Eukaryota"/>
</dbReference>
<dbReference type="InParanoid" id="Q6GL04"/>
<dbReference type="OMA" id="VWPAYPE"/>
<dbReference type="OrthoDB" id="27435at2759"/>
<dbReference type="Reactome" id="R-XTR-110320">
    <property type="pathway name" value="Translesion Synthesis by POLH"/>
</dbReference>
<dbReference type="Reactome" id="R-XTR-382556">
    <property type="pathway name" value="ABC-family proteins mediated transport"/>
</dbReference>
<dbReference type="Reactome" id="R-XTR-532668">
    <property type="pathway name" value="N-glycan trimming in the ER and Calnexin/Calreticulin cycle"/>
</dbReference>
<dbReference type="Reactome" id="R-XTR-5358346">
    <property type="pathway name" value="Hedgehog ligand biogenesis"/>
</dbReference>
<dbReference type="Reactome" id="R-XTR-5689896">
    <property type="pathway name" value="Ovarian tumor domain proteases"/>
</dbReference>
<dbReference type="Reactome" id="R-XTR-6798695">
    <property type="pathway name" value="Neutrophil degranulation"/>
</dbReference>
<dbReference type="Reactome" id="R-XTR-8876725">
    <property type="pathway name" value="Protein methylation"/>
</dbReference>
<dbReference type="Reactome" id="R-XTR-8951664">
    <property type="pathway name" value="Neddylation"/>
</dbReference>
<dbReference type="Reactome" id="R-XTR-9013407">
    <property type="pathway name" value="RHOH GTPase cycle"/>
</dbReference>
<dbReference type="Reactome" id="R-XTR-9755511">
    <property type="pathway name" value="KEAP1-NFE2L2 pathway"/>
</dbReference>
<dbReference type="Proteomes" id="UP000008143">
    <property type="component" value="Chromosome 1"/>
</dbReference>
<dbReference type="Bgee" id="ENSXETG00000025788">
    <property type="expression patterns" value="Expressed in neurula embryo and 21 other cell types or tissues"/>
</dbReference>
<dbReference type="GO" id="GO:0000785">
    <property type="term" value="C:chromatin"/>
    <property type="evidence" value="ECO:0000250"/>
    <property type="project" value="UniProtKB"/>
</dbReference>
<dbReference type="GO" id="GO:0005737">
    <property type="term" value="C:cytoplasm"/>
    <property type="evidence" value="ECO:0000250"/>
    <property type="project" value="UniProtKB"/>
</dbReference>
<dbReference type="GO" id="GO:0010494">
    <property type="term" value="C:cytoplasmic stress granule"/>
    <property type="evidence" value="ECO:0000250"/>
    <property type="project" value="UniProtKB"/>
</dbReference>
<dbReference type="GO" id="GO:0005829">
    <property type="term" value="C:cytosol"/>
    <property type="evidence" value="ECO:0007669"/>
    <property type="project" value="UniProtKB-SubCell"/>
</dbReference>
<dbReference type="GO" id="GO:0005783">
    <property type="term" value="C:endoplasmic reticulum"/>
    <property type="evidence" value="ECO:0007669"/>
    <property type="project" value="UniProtKB-SubCell"/>
</dbReference>
<dbReference type="GO" id="GO:0005634">
    <property type="term" value="C:nucleus"/>
    <property type="evidence" value="ECO:0000250"/>
    <property type="project" value="UniProtKB"/>
</dbReference>
<dbReference type="GO" id="GO:0035861">
    <property type="term" value="C:site of double-strand break"/>
    <property type="evidence" value="ECO:0000250"/>
    <property type="project" value="UniProtKB"/>
</dbReference>
<dbReference type="GO" id="GO:0005524">
    <property type="term" value="F:ATP binding"/>
    <property type="evidence" value="ECO:0007669"/>
    <property type="project" value="UniProtKB-KW"/>
</dbReference>
<dbReference type="GO" id="GO:0016887">
    <property type="term" value="F:ATP hydrolysis activity"/>
    <property type="evidence" value="ECO:0000250"/>
    <property type="project" value="UniProtKB"/>
</dbReference>
<dbReference type="GO" id="GO:0042802">
    <property type="term" value="F:identical protein binding"/>
    <property type="evidence" value="ECO:0000250"/>
    <property type="project" value="UniProtKB"/>
</dbReference>
<dbReference type="GO" id="GO:0008289">
    <property type="term" value="F:lipid binding"/>
    <property type="evidence" value="ECO:0007669"/>
    <property type="project" value="UniProtKB-KW"/>
</dbReference>
<dbReference type="GO" id="GO:0044877">
    <property type="term" value="F:protein-containing complex binding"/>
    <property type="evidence" value="ECO:0000250"/>
    <property type="project" value="UniProtKB"/>
</dbReference>
<dbReference type="GO" id="GO:0097352">
    <property type="term" value="P:autophagosome maturation"/>
    <property type="evidence" value="ECO:0000250"/>
    <property type="project" value="UniProtKB"/>
</dbReference>
<dbReference type="GO" id="GO:0006914">
    <property type="term" value="P:autophagy"/>
    <property type="evidence" value="ECO:0000250"/>
    <property type="project" value="UniProtKB"/>
</dbReference>
<dbReference type="GO" id="GO:0055013">
    <property type="term" value="P:cardiac muscle cell development"/>
    <property type="evidence" value="ECO:0007669"/>
    <property type="project" value="Ensembl"/>
</dbReference>
<dbReference type="GO" id="GO:1903843">
    <property type="term" value="P:cellular response to arsenite ion"/>
    <property type="evidence" value="ECO:0000250"/>
    <property type="project" value="UniProtKB"/>
</dbReference>
<dbReference type="GO" id="GO:0034605">
    <property type="term" value="P:cellular response to heat"/>
    <property type="evidence" value="ECO:0000250"/>
    <property type="project" value="UniProtKB"/>
</dbReference>
<dbReference type="GO" id="GO:0043009">
    <property type="term" value="P:chordate embryonic development"/>
    <property type="evidence" value="ECO:0007669"/>
    <property type="project" value="Ensembl"/>
</dbReference>
<dbReference type="GO" id="GO:0006974">
    <property type="term" value="P:DNA damage response"/>
    <property type="evidence" value="ECO:0000250"/>
    <property type="project" value="UniProtKB"/>
</dbReference>
<dbReference type="GO" id="GO:0006281">
    <property type="term" value="P:DNA repair"/>
    <property type="evidence" value="ECO:0000250"/>
    <property type="project" value="UniProtKB"/>
</dbReference>
<dbReference type="GO" id="GO:0006302">
    <property type="term" value="P:double-strand break repair"/>
    <property type="evidence" value="ECO:0000250"/>
    <property type="project" value="UniProtKB"/>
</dbReference>
<dbReference type="GO" id="GO:0061857">
    <property type="term" value="P:endoplasmic reticulum stress-induced pre-emptive quality control"/>
    <property type="evidence" value="ECO:0000250"/>
    <property type="project" value="UniProtKB"/>
</dbReference>
<dbReference type="GO" id="GO:0032510">
    <property type="term" value="P:endosome to lysosome transport via multivesicular body sorting pathway"/>
    <property type="evidence" value="ECO:0000250"/>
    <property type="project" value="UniProtKB"/>
</dbReference>
<dbReference type="GO" id="GO:0036503">
    <property type="term" value="P:ERAD pathway"/>
    <property type="evidence" value="ECO:0000250"/>
    <property type="project" value="UniProtKB"/>
</dbReference>
<dbReference type="GO" id="GO:0060047">
    <property type="term" value="P:heart contraction"/>
    <property type="evidence" value="ECO:0007669"/>
    <property type="project" value="Ensembl"/>
</dbReference>
<dbReference type="GO" id="GO:0036297">
    <property type="term" value="P:interstrand cross-link repair"/>
    <property type="evidence" value="ECO:0000250"/>
    <property type="project" value="UniProtKB"/>
</dbReference>
<dbReference type="GO" id="GO:0007626">
    <property type="term" value="P:locomotory behavior"/>
    <property type="evidence" value="ECO:0007669"/>
    <property type="project" value="Ensembl"/>
</dbReference>
<dbReference type="GO" id="GO:0016236">
    <property type="term" value="P:macroautophagy"/>
    <property type="evidence" value="ECO:0000250"/>
    <property type="project" value="UniProtKB"/>
</dbReference>
<dbReference type="GO" id="GO:0030239">
    <property type="term" value="P:myofibril assembly"/>
    <property type="evidence" value="ECO:0007669"/>
    <property type="project" value="Ensembl"/>
</dbReference>
<dbReference type="GO" id="GO:0010498">
    <property type="term" value="P:proteasomal protein catabolic process"/>
    <property type="evidence" value="ECO:0000250"/>
    <property type="project" value="UniProtKB"/>
</dbReference>
<dbReference type="GO" id="GO:0043161">
    <property type="term" value="P:proteasome-mediated ubiquitin-dependent protein catabolic process"/>
    <property type="evidence" value="ECO:0000250"/>
    <property type="project" value="UniProtKB"/>
</dbReference>
<dbReference type="GO" id="GO:0016567">
    <property type="term" value="P:protein ubiquitination"/>
    <property type="evidence" value="ECO:0000250"/>
    <property type="project" value="UniProtKB"/>
</dbReference>
<dbReference type="GO" id="GO:0010506">
    <property type="term" value="P:regulation of autophagy"/>
    <property type="evidence" value="ECO:0007669"/>
    <property type="project" value="Ensembl"/>
</dbReference>
<dbReference type="GO" id="GO:0032434">
    <property type="term" value="P:regulation of proteasomal ubiquitin-dependent protein catabolic process"/>
    <property type="evidence" value="ECO:0007669"/>
    <property type="project" value="Ensembl"/>
</dbReference>
<dbReference type="GO" id="GO:1905634">
    <property type="term" value="P:regulation of protein localization to chromatin"/>
    <property type="evidence" value="ECO:0000250"/>
    <property type="project" value="UniProtKB"/>
</dbReference>
<dbReference type="GO" id="GO:0035617">
    <property type="term" value="P:stress granule disassembly"/>
    <property type="evidence" value="ECO:0000250"/>
    <property type="project" value="UniProtKB"/>
</dbReference>
<dbReference type="GO" id="GO:0019985">
    <property type="term" value="P:translesion synthesis"/>
    <property type="evidence" value="ECO:0000250"/>
    <property type="project" value="UniProtKB"/>
</dbReference>
<dbReference type="CDD" id="cd19519">
    <property type="entry name" value="RecA-like_CDC48_r1-like"/>
    <property type="match status" value="1"/>
</dbReference>
<dbReference type="CDD" id="cd19528">
    <property type="entry name" value="RecA-like_CDC48_r2-like"/>
    <property type="match status" value="1"/>
</dbReference>
<dbReference type="FunFam" id="1.10.8.60:FF:000004">
    <property type="entry name" value="Cell division control 48"/>
    <property type="match status" value="1"/>
</dbReference>
<dbReference type="FunFam" id="3.10.330.10:FF:000001">
    <property type="entry name" value="Cell division control 48"/>
    <property type="match status" value="1"/>
</dbReference>
<dbReference type="FunFam" id="2.40.40.20:FF:000003">
    <property type="entry name" value="Transitional endoplasmic reticulum ATPase"/>
    <property type="match status" value="1"/>
</dbReference>
<dbReference type="FunFam" id="3.40.50.300:FF:000012">
    <property type="entry name" value="Transitional endoplasmic reticulum ATPase"/>
    <property type="match status" value="1"/>
</dbReference>
<dbReference type="FunFam" id="3.40.50.300:FF:000048">
    <property type="entry name" value="Transitional endoplasmic reticulum ATPase"/>
    <property type="match status" value="1"/>
</dbReference>
<dbReference type="Gene3D" id="1.10.8.60">
    <property type="match status" value="1"/>
</dbReference>
<dbReference type="Gene3D" id="2.40.40.20">
    <property type="match status" value="1"/>
</dbReference>
<dbReference type="Gene3D" id="3.10.330.10">
    <property type="match status" value="1"/>
</dbReference>
<dbReference type="Gene3D" id="6.10.20.150">
    <property type="match status" value="1"/>
</dbReference>
<dbReference type="Gene3D" id="3.40.50.300">
    <property type="entry name" value="P-loop containing nucleotide triphosphate hydrolases"/>
    <property type="match status" value="2"/>
</dbReference>
<dbReference type="InterPro" id="IPR003593">
    <property type="entry name" value="AAA+_ATPase"/>
</dbReference>
<dbReference type="InterPro" id="IPR005938">
    <property type="entry name" value="AAA_ATPase_CDC48"/>
</dbReference>
<dbReference type="InterPro" id="IPR050168">
    <property type="entry name" value="AAA_ATPase_domain"/>
</dbReference>
<dbReference type="InterPro" id="IPR041569">
    <property type="entry name" value="AAA_lid_3"/>
</dbReference>
<dbReference type="InterPro" id="IPR009010">
    <property type="entry name" value="Asp_de-COase-like_dom_sf"/>
</dbReference>
<dbReference type="InterPro" id="IPR003959">
    <property type="entry name" value="ATPase_AAA_core"/>
</dbReference>
<dbReference type="InterPro" id="IPR003960">
    <property type="entry name" value="ATPase_AAA_CS"/>
</dbReference>
<dbReference type="InterPro" id="IPR004201">
    <property type="entry name" value="Cdc48_dom2"/>
</dbReference>
<dbReference type="InterPro" id="IPR029067">
    <property type="entry name" value="CDC48_domain_2-like_sf"/>
</dbReference>
<dbReference type="InterPro" id="IPR003338">
    <property type="entry name" value="CDC4_N-term_subdom"/>
</dbReference>
<dbReference type="InterPro" id="IPR027417">
    <property type="entry name" value="P-loop_NTPase"/>
</dbReference>
<dbReference type="NCBIfam" id="TIGR01243">
    <property type="entry name" value="CDC48"/>
    <property type="match status" value="1"/>
</dbReference>
<dbReference type="PANTHER" id="PTHR23077">
    <property type="entry name" value="AAA-FAMILY ATPASE"/>
    <property type="match status" value="1"/>
</dbReference>
<dbReference type="PANTHER" id="PTHR23077:SF69">
    <property type="entry name" value="TRANSITIONAL ENDOPLASMIC RETICULUM ATPASE"/>
    <property type="match status" value="1"/>
</dbReference>
<dbReference type="Pfam" id="PF00004">
    <property type="entry name" value="AAA"/>
    <property type="match status" value="2"/>
</dbReference>
<dbReference type="Pfam" id="PF17862">
    <property type="entry name" value="AAA_lid_3"/>
    <property type="match status" value="2"/>
</dbReference>
<dbReference type="Pfam" id="PF02933">
    <property type="entry name" value="CDC48_2"/>
    <property type="match status" value="1"/>
</dbReference>
<dbReference type="Pfam" id="PF02359">
    <property type="entry name" value="CDC48_N"/>
    <property type="match status" value="1"/>
</dbReference>
<dbReference type="SMART" id="SM00382">
    <property type="entry name" value="AAA"/>
    <property type="match status" value="2"/>
</dbReference>
<dbReference type="SMART" id="SM01072">
    <property type="entry name" value="CDC48_2"/>
    <property type="match status" value="1"/>
</dbReference>
<dbReference type="SMART" id="SM01073">
    <property type="entry name" value="CDC48_N"/>
    <property type="match status" value="1"/>
</dbReference>
<dbReference type="SUPFAM" id="SSF50692">
    <property type="entry name" value="ADC-like"/>
    <property type="match status" value="1"/>
</dbReference>
<dbReference type="SUPFAM" id="SSF54585">
    <property type="entry name" value="Cdc48 domain 2-like"/>
    <property type="match status" value="1"/>
</dbReference>
<dbReference type="SUPFAM" id="SSF52540">
    <property type="entry name" value="P-loop containing nucleoside triphosphate hydrolases"/>
    <property type="match status" value="2"/>
</dbReference>
<dbReference type="PROSITE" id="PS00674">
    <property type="entry name" value="AAA"/>
    <property type="match status" value="2"/>
</dbReference>
<reference evidence="8" key="1">
    <citation type="submission" date="2004-06" db="EMBL/GenBank/DDBJ databases">
        <authorList>
            <consortium name="NIH - Xenopus Gene Collection (XGC) project"/>
        </authorList>
    </citation>
    <scope>NUCLEOTIDE SEQUENCE [LARGE SCALE MRNA]</scope>
    <source>
        <tissue evidence="8">Tail bud</tissue>
    </source>
</reference>
<proteinExistence type="evidence at transcript level"/>